<evidence type="ECO:0000250" key="1">
    <source>
        <dbReference type="UniProtKB" id="Q9QUH0"/>
    </source>
</evidence>
<evidence type="ECO:0000255" key="2">
    <source>
        <dbReference type="PROSITE-ProRule" id="PRU00686"/>
    </source>
</evidence>
<evidence type="ECO:0000269" key="3">
    <source>
    </source>
</evidence>
<evidence type="ECO:0000305" key="4"/>
<evidence type="ECO:0007744" key="5">
    <source>
    </source>
</evidence>
<evidence type="ECO:0007829" key="6">
    <source>
        <dbReference type="PDB" id="4RQR"/>
    </source>
</evidence>
<gene>
    <name type="primary">GLRX</name>
    <name type="synonym">GRX</name>
</gene>
<feature type="initiator methionine" description="Removed" evidence="3 5">
    <location>
        <position position="1"/>
    </location>
</feature>
<feature type="chain" id="PRO_0000141600" description="Glutaredoxin-1">
    <location>
        <begin position="2"/>
        <end position="106"/>
    </location>
</feature>
<feature type="domain" description="Glutaredoxin" evidence="2">
    <location>
        <begin position="3"/>
        <end position="106"/>
    </location>
</feature>
<feature type="modified residue" description="N-acetylalanine" evidence="5">
    <location>
        <position position="2"/>
    </location>
</feature>
<feature type="modified residue" description="N6-succinyllysine" evidence="1">
    <location>
        <position position="9"/>
    </location>
</feature>
<feature type="disulfide bond" description="Redox-active">
    <location>
        <begin position="23"/>
        <end position="26"/>
    </location>
</feature>
<feature type="disulfide bond">
    <location>
        <begin position="79"/>
        <end position="83"/>
    </location>
</feature>
<feature type="sequence variant" id="VAR_049189" description="In dbSNP:rs4767.">
    <original>D</original>
    <variation>Y</variation>
    <location>
        <position position="47"/>
    </location>
</feature>
<feature type="sequence conflict" description="In Ref. 1; BAA04769." evidence="4" ref="1">
    <original>L</original>
    <variation>V</variation>
    <location>
        <position position="96"/>
    </location>
</feature>
<feature type="helix" evidence="6">
    <location>
        <begin position="2"/>
        <end position="9"/>
    </location>
</feature>
<feature type="strand" evidence="6">
    <location>
        <begin position="15"/>
        <end position="19"/>
    </location>
</feature>
<feature type="helix" evidence="6">
    <location>
        <begin position="24"/>
        <end position="34"/>
    </location>
</feature>
<feature type="strand" evidence="6">
    <location>
        <begin position="42"/>
        <end position="47"/>
    </location>
</feature>
<feature type="turn" evidence="6">
    <location>
        <begin position="48"/>
        <end position="51"/>
    </location>
</feature>
<feature type="helix" evidence="6">
    <location>
        <begin position="54"/>
        <end position="65"/>
    </location>
</feature>
<feature type="strand" evidence="6">
    <location>
        <begin position="72"/>
        <end position="75"/>
    </location>
</feature>
<feature type="strand" evidence="6">
    <location>
        <begin position="78"/>
        <end position="82"/>
    </location>
</feature>
<feature type="helix" evidence="6">
    <location>
        <begin position="83"/>
        <end position="92"/>
    </location>
</feature>
<feature type="helix" evidence="6">
    <location>
        <begin position="94"/>
        <end position="101"/>
    </location>
</feature>
<sequence>MAQEFVNCKIQPGKVVVFIKPTCPYCRRAQEILSQLPIKQGLLEFVDITATNHTNEIQDYLQQLTGARTVPRVFIGKDCIGGCSDLVSLQQSGELLTRLKQIGALQ</sequence>
<dbReference type="EMBL" id="D21238">
    <property type="protein sequence ID" value="BAA04769.1"/>
    <property type="molecule type" value="mRNA"/>
</dbReference>
<dbReference type="EMBL" id="X76648">
    <property type="protein sequence ID" value="CAA54094.1"/>
    <property type="molecule type" value="mRNA"/>
</dbReference>
<dbReference type="EMBL" id="AF069668">
    <property type="protein sequence ID" value="AAC35798.1"/>
    <property type="molecule type" value="mRNA"/>
</dbReference>
<dbReference type="EMBL" id="AF115105">
    <property type="protein sequence ID" value="AAC98318.1"/>
    <property type="molecule type" value="Genomic_DNA"/>
</dbReference>
<dbReference type="EMBL" id="AF115104">
    <property type="protein sequence ID" value="AAC98318.1"/>
    <property type="status" value="JOINED"/>
    <property type="molecule type" value="Genomic_DNA"/>
</dbReference>
<dbReference type="EMBL" id="AF162769">
    <property type="protein sequence ID" value="AAD43353.1"/>
    <property type="molecule type" value="mRNA"/>
</dbReference>
<dbReference type="EMBL" id="BT006689">
    <property type="protein sequence ID" value="AAP35335.1"/>
    <property type="molecule type" value="mRNA"/>
</dbReference>
<dbReference type="EMBL" id="CR450312">
    <property type="protein sequence ID" value="CAG29308.1"/>
    <property type="molecule type" value="mRNA"/>
</dbReference>
<dbReference type="EMBL" id="CR542165">
    <property type="protein sequence ID" value="CAG46962.1"/>
    <property type="molecule type" value="mRNA"/>
</dbReference>
<dbReference type="EMBL" id="AK311868">
    <property type="protein sequence ID" value="BAG34809.1"/>
    <property type="molecule type" value="mRNA"/>
</dbReference>
<dbReference type="EMBL" id="DQ026062">
    <property type="protein sequence ID" value="AAY29058.1"/>
    <property type="molecule type" value="Genomic_DNA"/>
</dbReference>
<dbReference type="EMBL" id="CH471084">
    <property type="protein sequence ID" value="EAW96056.1"/>
    <property type="molecule type" value="Genomic_DNA"/>
</dbReference>
<dbReference type="EMBL" id="BC005304">
    <property type="protein sequence ID" value="AAH05304.1"/>
    <property type="molecule type" value="mRNA"/>
</dbReference>
<dbReference type="EMBL" id="BC010965">
    <property type="protein sequence ID" value="AAH10965.1"/>
    <property type="molecule type" value="mRNA"/>
</dbReference>
<dbReference type="EMBL" id="BC106075">
    <property type="protein sequence ID" value="AAI06076.1"/>
    <property type="molecule type" value="mRNA"/>
</dbReference>
<dbReference type="CCDS" id="CCDS4078.1"/>
<dbReference type="PIR" id="S68701">
    <property type="entry name" value="S47472"/>
</dbReference>
<dbReference type="RefSeq" id="NP_001112362.1">
    <property type="nucleotide sequence ID" value="NM_001118890.2"/>
</dbReference>
<dbReference type="RefSeq" id="NP_001230587.1">
    <property type="nucleotide sequence ID" value="NM_001243658.2"/>
</dbReference>
<dbReference type="RefSeq" id="NP_001230588.1">
    <property type="nucleotide sequence ID" value="NM_001243659.2"/>
</dbReference>
<dbReference type="RefSeq" id="NP_002055.1">
    <property type="nucleotide sequence ID" value="NM_002064.3"/>
</dbReference>
<dbReference type="PDB" id="1B4Q">
    <property type="method" value="NMR"/>
    <property type="chains" value="A=2-106"/>
</dbReference>
<dbReference type="PDB" id="1JHB">
    <property type="method" value="NMR"/>
    <property type="chains" value="A=1-106"/>
</dbReference>
<dbReference type="PDB" id="4RQR">
    <property type="method" value="X-ray"/>
    <property type="resolution" value="1.08 A"/>
    <property type="chains" value="A=2-106"/>
</dbReference>
<dbReference type="PDBsum" id="1B4Q"/>
<dbReference type="PDBsum" id="1JHB"/>
<dbReference type="PDBsum" id="4RQR"/>
<dbReference type="SMR" id="P35754"/>
<dbReference type="BioGRID" id="109007">
    <property type="interactions" value="56"/>
</dbReference>
<dbReference type="FunCoup" id="P35754">
    <property type="interactions" value="439"/>
</dbReference>
<dbReference type="IntAct" id="P35754">
    <property type="interactions" value="19"/>
</dbReference>
<dbReference type="MINT" id="P35754"/>
<dbReference type="STRING" id="9606.ENSP00000369314"/>
<dbReference type="BindingDB" id="P35754"/>
<dbReference type="DrugBank" id="DB00143">
    <property type="generic name" value="Glutathione"/>
</dbReference>
<dbReference type="GlyCosmos" id="P35754">
    <property type="glycosylation" value="1 site, 2 glycans"/>
</dbReference>
<dbReference type="GlyGen" id="P35754">
    <property type="glycosylation" value="5 sites, 2 O-linked glycans (1 site)"/>
</dbReference>
<dbReference type="iPTMnet" id="P35754"/>
<dbReference type="PhosphoSitePlus" id="P35754"/>
<dbReference type="BioMuta" id="GLRX"/>
<dbReference type="DMDM" id="1346143"/>
<dbReference type="jPOST" id="P35754"/>
<dbReference type="MassIVE" id="P35754"/>
<dbReference type="PaxDb" id="9606-ENSP00000369314"/>
<dbReference type="PeptideAtlas" id="P35754"/>
<dbReference type="ProteomicsDB" id="55150"/>
<dbReference type="Pumba" id="P35754"/>
<dbReference type="Antibodypedia" id="3264">
    <property type="antibodies" value="258 antibodies from 31 providers"/>
</dbReference>
<dbReference type="DNASU" id="2745"/>
<dbReference type="Ensembl" id="ENST00000237858.11">
    <property type="protein sequence ID" value="ENSP00000237858.6"/>
    <property type="gene ID" value="ENSG00000173221.14"/>
</dbReference>
<dbReference type="Ensembl" id="ENST00000379979.8">
    <property type="protein sequence ID" value="ENSP00000369314.4"/>
    <property type="gene ID" value="ENSG00000173221.14"/>
</dbReference>
<dbReference type="Ensembl" id="ENST00000505427.1">
    <property type="protein sequence ID" value="ENSP00000427353.1"/>
    <property type="gene ID" value="ENSG00000173221.14"/>
</dbReference>
<dbReference type="Ensembl" id="ENST00000508780.5">
    <property type="protein sequence ID" value="ENSP00000422708.1"/>
    <property type="gene ID" value="ENSG00000173221.14"/>
</dbReference>
<dbReference type="Ensembl" id="ENST00000512469.2">
    <property type="protein sequence ID" value="ENSP00000424636.2"/>
    <property type="gene ID" value="ENSG00000173221.14"/>
</dbReference>
<dbReference type="GeneID" id="2745"/>
<dbReference type="KEGG" id="hsa:2745"/>
<dbReference type="MANE-Select" id="ENST00000237858.11">
    <property type="protein sequence ID" value="ENSP00000237858.6"/>
    <property type="RefSeq nucleotide sequence ID" value="NM_001118890.2"/>
    <property type="RefSeq protein sequence ID" value="NP_001112362.1"/>
</dbReference>
<dbReference type="UCSC" id="uc003kln.5">
    <property type="organism name" value="human"/>
</dbReference>
<dbReference type="AGR" id="HGNC:4330"/>
<dbReference type="CTD" id="2745"/>
<dbReference type="DisGeNET" id="2745"/>
<dbReference type="GeneCards" id="GLRX"/>
<dbReference type="HGNC" id="HGNC:4330">
    <property type="gene designation" value="GLRX"/>
</dbReference>
<dbReference type="HPA" id="ENSG00000173221">
    <property type="expression patterns" value="Tissue enhanced (skeletal)"/>
</dbReference>
<dbReference type="MIM" id="600443">
    <property type="type" value="gene"/>
</dbReference>
<dbReference type="neXtProt" id="NX_P35754"/>
<dbReference type="OpenTargets" id="ENSG00000173221"/>
<dbReference type="PharmGKB" id="PA28731"/>
<dbReference type="VEuPathDB" id="HostDB:ENSG00000173221"/>
<dbReference type="eggNOG" id="KOG1752">
    <property type="taxonomic scope" value="Eukaryota"/>
</dbReference>
<dbReference type="GeneTree" id="ENSGT00900000141068"/>
<dbReference type="HOGENOM" id="CLU_026126_7_2_1"/>
<dbReference type="InParanoid" id="P35754"/>
<dbReference type="OMA" id="KPGHLEC"/>
<dbReference type="OrthoDB" id="418495at2759"/>
<dbReference type="PAN-GO" id="P35754">
    <property type="GO annotations" value="2 GO annotations based on evolutionary models"/>
</dbReference>
<dbReference type="PhylomeDB" id="P35754"/>
<dbReference type="TreeFam" id="TF326994"/>
<dbReference type="BioCyc" id="MetaCyc:HS04268-MONOMER"/>
<dbReference type="PathwayCommons" id="P35754"/>
<dbReference type="Reactome" id="R-HSA-499943">
    <property type="pathway name" value="Interconversion of nucleotide di- and triphosphates"/>
</dbReference>
<dbReference type="SABIO-RK" id="P35754"/>
<dbReference type="SignaLink" id="P35754"/>
<dbReference type="BioGRID-ORCS" id="2745">
    <property type="hits" value="37 hits in 1096 CRISPR screens"/>
</dbReference>
<dbReference type="ChiTaRS" id="GLRX">
    <property type="organism name" value="human"/>
</dbReference>
<dbReference type="EvolutionaryTrace" id="P35754"/>
<dbReference type="GeneWiki" id="GLRX"/>
<dbReference type="GenomeRNAi" id="2745"/>
<dbReference type="Pharos" id="P35754">
    <property type="development level" value="Tbio"/>
</dbReference>
<dbReference type="PRO" id="PR:P35754"/>
<dbReference type="Proteomes" id="UP000005640">
    <property type="component" value="Chromosome 5"/>
</dbReference>
<dbReference type="RNAct" id="P35754">
    <property type="molecule type" value="protein"/>
</dbReference>
<dbReference type="Bgee" id="ENSG00000173221">
    <property type="expression patterns" value="Expressed in jejunal mucosa and 202 other cell types or tissues"/>
</dbReference>
<dbReference type="ExpressionAtlas" id="P35754">
    <property type="expression patterns" value="baseline and differential"/>
</dbReference>
<dbReference type="GO" id="GO:0005829">
    <property type="term" value="C:cytosol"/>
    <property type="evidence" value="ECO:0000304"/>
    <property type="project" value="UniProtKB"/>
</dbReference>
<dbReference type="GO" id="GO:0070062">
    <property type="term" value="C:extracellular exosome"/>
    <property type="evidence" value="ECO:0007005"/>
    <property type="project" value="UniProtKB"/>
</dbReference>
<dbReference type="GO" id="GO:0005634">
    <property type="term" value="C:nucleus"/>
    <property type="evidence" value="ECO:0007669"/>
    <property type="project" value="Ensembl"/>
</dbReference>
<dbReference type="GO" id="GO:0015038">
    <property type="term" value="F:glutathione disulfide oxidoreductase activity"/>
    <property type="evidence" value="ECO:0000269"/>
    <property type="project" value="Reactome"/>
</dbReference>
<dbReference type="GO" id="GO:0017080">
    <property type="term" value="F:sodium channel regulator activity"/>
    <property type="evidence" value="ECO:0000314"/>
    <property type="project" value="BHF-UCL"/>
</dbReference>
<dbReference type="GO" id="GO:0015949">
    <property type="term" value="P:nucleobase-containing small molecule interconversion"/>
    <property type="evidence" value="ECO:0000304"/>
    <property type="project" value="Reactome"/>
</dbReference>
<dbReference type="GO" id="GO:0045838">
    <property type="term" value="P:positive regulation of membrane potential"/>
    <property type="evidence" value="ECO:0000314"/>
    <property type="project" value="BHF-UCL"/>
</dbReference>
<dbReference type="CDD" id="cd03419">
    <property type="entry name" value="GRX_GRXh_1_2_like"/>
    <property type="match status" value="1"/>
</dbReference>
<dbReference type="FunFam" id="3.40.30.10:FF:000214">
    <property type="entry name" value="glutaredoxin-1 isoform X1"/>
    <property type="match status" value="1"/>
</dbReference>
<dbReference type="Gene3D" id="3.40.30.10">
    <property type="entry name" value="Glutaredoxin"/>
    <property type="match status" value="1"/>
</dbReference>
<dbReference type="InterPro" id="IPR011767">
    <property type="entry name" value="GLR_AS"/>
</dbReference>
<dbReference type="InterPro" id="IPR047185">
    <property type="entry name" value="GLRX1"/>
</dbReference>
<dbReference type="InterPro" id="IPR002109">
    <property type="entry name" value="Glutaredoxin"/>
</dbReference>
<dbReference type="InterPro" id="IPR011899">
    <property type="entry name" value="Glutaredoxin_euk/vir"/>
</dbReference>
<dbReference type="InterPro" id="IPR014025">
    <property type="entry name" value="Glutaredoxin_subgr"/>
</dbReference>
<dbReference type="InterPro" id="IPR036249">
    <property type="entry name" value="Thioredoxin-like_sf"/>
</dbReference>
<dbReference type="NCBIfam" id="TIGR02180">
    <property type="entry name" value="GRX_euk"/>
    <property type="match status" value="1"/>
</dbReference>
<dbReference type="PANTHER" id="PTHR46185">
    <property type="entry name" value="GLUTAREDOXIN-1"/>
    <property type="match status" value="1"/>
</dbReference>
<dbReference type="PANTHER" id="PTHR46185:SF1">
    <property type="entry name" value="GLUTAREDOXIN-1"/>
    <property type="match status" value="1"/>
</dbReference>
<dbReference type="Pfam" id="PF00462">
    <property type="entry name" value="Glutaredoxin"/>
    <property type="match status" value="1"/>
</dbReference>
<dbReference type="PRINTS" id="PR00160">
    <property type="entry name" value="GLUTAREDOXIN"/>
</dbReference>
<dbReference type="SUPFAM" id="SSF52833">
    <property type="entry name" value="Thioredoxin-like"/>
    <property type="match status" value="1"/>
</dbReference>
<dbReference type="PROSITE" id="PS00195">
    <property type="entry name" value="GLUTAREDOXIN_1"/>
    <property type="match status" value="1"/>
</dbReference>
<dbReference type="PROSITE" id="PS51354">
    <property type="entry name" value="GLUTAREDOXIN_2"/>
    <property type="match status" value="1"/>
</dbReference>
<reference key="1">
    <citation type="journal article" date="1994" name="Biochim. Biophys. Acta">
        <title>Cloning and sequencing of the cDNA encoding human glutaredoxin.</title>
        <authorList>
            <person name="Fernando M.R."/>
            <person name="Sumimoto H."/>
            <person name="Nanri H."/>
            <person name="Kawabata S."/>
            <person name="Iwanaga S."/>
            <person name="Minakami S."/>
            <person name="Fukumaki Y."/>
            <person name="Takeshige K."/>
        </authorList>
    </citation>
    <scope>NUCLEOTIDE SEQUENCE [MRNA]</scope>
    <source>
        <tissue>Brain</tissue>
    </source>
</reference>
<reference key="2">
    <citation type="journal article" date="1995" name="Eur. J. Biochem.">
        <title>Purification from placenta, amino acid sequence, structure comparisons and cDNA cloning of human glutaredoxin.</title>
        <authorList>
            <person name="Padilla C.A."/>
            <person name="Martinez-Galisteo E."/>
            <person name="Barcena J.A."/>
            <person name="Spyrou G."/>
            <person name="Holmgren A."/>
        </authorList>
    </citation>
    <scope>NUCLEOTIDE SEQUENCE [MRNA]</scope>
    <source>
        <tissue>Spleen</tissue>
    </source>
</reference>
<reference key="3">
    <citation type="journal article" date="1996" name="Biochem. J.">
        <title>Purification, cloning and expression of dehydroascorbic acid-reducing activity from human neutrophils: identification as glutaredoxin.</title>
        <authorList>
            <person name="Park J.B."/>
            <person name="Levine M."/>
        </authorList>
    </citation>
    <scope>NUCLEOTIDE SEQUENCE [MRNA]</scope>
    <scope>PARTIAL PROTEIN SEQUENCE</scope>
</reference>
<reference key="4">
    <citation type="journal article" date="1997" name="Gene">
        <title>The human glutaredoxin gene: determination of its organization, transcription start point, and promoter analysis.</title>
        <authorList>
            <person name="Park J.B."/>
            <person name="Levine M."/>
        </authorList>
    </citation>
    <scope>NUCLEOTIDE SEQUENCE [GENOMIC DNA]</scope>
</reference>
<reference key="5">
    <citation type="journal article" date="2001" name="Invest. Ophthalmol. Vis. Sci.">
        <title>Human lens thioltransferase: cloning, purification, and function.</title>
        <authorList>
            <person name="Qiao F."/>
            <person name="Xing K.Y."/>
            <person name="Liu A."/>
            <person name="Ehlers N."/>
            <person name="Raghavachari N."/>
            <person name="Lou M.F."/>
        </authorList>
    </citation>
    <scope>NUCLEOTIDE SEQUENCE [MRNA]</scope>
    <source>
        <tissue>Lens</tissue>
    </source>
</reference>
<reference key="6">
    <citation type="submission" date="2003-05" db="EMBL/GenBank/DDBJ databases">
        <title>Cloning of human full-length CDSs in BD Creator(TM) system donor vector.</title>
        <authorList>
            <person name="Kalnine N."/>
            <person name="Chen X."/>
            <person name="Rolfs A."/>
            <person name="Halleck A."/>
            <person name="Hines L."/>
            <person name="Eisenstein S."/>
            <person name="Koundinya M."/>
            <person name="Raphael J."/>
            <person name="Moreira D."/>
            <person name="Kelley T."/>
            <person name="LaBaer J."/>
            <person name="Lin Y."/>
            <person name="Phelan M."/>
            <person name="Farmer A."/>
        </authorList>
    </citation>
    <scope>NUCLEOTIDE SEQUENCE [LARGE SCALE MRNA]</scope>
</reference>
<reference key="7">
    <citation type="submission" date="2004-05" db="EMBL/GenBank/DDBJ databases">
        <title>Cloning of human full open reading frames in Gateway(TM) system entry vector (pDONR201).</title>
        <authorList>
            <person name="Ebert L."/>
            <person name="Schick M."/>
            <person name="Neubert P."/>
            <person name="Schatten R."/>
            <person name="Henze S."/>
            <person name="Korn B."/>
        </authorList>
    </citation>
    <scope>NUCLEOTIDE SEQUENCE [LARGE SCALE MRNA]</scope>
</reference>
<reference key="8">
    <citation type="submission" date="2004-06" db="EMBL/GenBank/DDBJ databases">
        <title>Cloning of human full open reading frames in Gateway(TM) system entry vector (pDONR201).</title>
        <authorList>
            <person name="Halleck A."/>
            <person name="Ebert L."/>
            <person name="Mkoundinya M."/>
            <person name="Schick M."/>
            <person name="Eisenstein S."/>
            <person name="Neubert P."/>
            <person name="Kstrang K."/>
            <person name="Schatten R."/>
            <person name="Shen B."/>
            <person name="Henze S."/>
            <person name="Mar W."/>
            <person name="Korn B."/>
            <person name="Zuo D."/>
            <person name="Hu Y."/>
            <person name="LaBaer J."/>
        </authorList>
    </citation>
    <scope>NUCLEOTIDE SEQUENCE [LARGE SCALE MRNA]</scope>
</reference>
<reference key="9">
    <citation type="journal article" date="2004" name="Nat. Genet.">
        <title>Complete sequencing and characterization of 21,243 full-length human cDNAs.</title>
        <authorList>
            <person name="Ota T."/>
            <person name="Suzuki Y."/>
            <person name="Nishikawa T."/>
            <person name="Otsuki T."/>
            <person name="Sugiyama T."/>
            <person name="Irie R."/>
            <person name="Wakamatsu A."/>
            <person name="Hayashi K."/>
            <person name="Sato H."/>
            <person name="Nagai K."/>
            <person name="Kimura K."/>
            <person name="Makita H."/>
            <person name="Sekine M."/>
            <person name="Obayashi M."/>
            <person name="Nishi T."/>
            <person name="Shibahara T."/>
            <person name="Tanaka T."/>
            <person name="Ishii S."/>
            <person name="Yamamoto J."/>
            <person name="Saito K."/>
            <person name="Kawai Y."/>
            <person name="Isono Y."/>
            <person name="Nakamura Y."/>
            <person name="Nagahari K."/>
            <person name="Murakami K."/>
            <person name="Yasuda T."/>
            <person name="Iwayanagi T."/>
            <person name="Wagatsuma M."/>
            <person name="Shiratori A."/>
            <person name="Sudo H."/>
            <person name="Hosoiri T."/>
            <person name="Kaku Y."/>
            <person name="Kodaira H."/>
            <person name="Kondo H."/>
            <person name="Sugawara M."/>
            <person name="Takahashi M."/>
            <person name="Kanda K."/>
            <person name="Yokoi T."/>
            <person name="Furuya T."/>
            <person name="Kikkawa E."/>
            <person name="Omura Y."/>
            <person name="Abe K."/>
            <person name="Kamihara K."/>
            <person name="Katsuta N."/>
            <person name="Sato K."/>
            <person name="Tanikawa M."/>
            <person name="Yamazaki M."/>
            <person name="Ninomiya K."/>
            <person name="Ishibashi T."/>
            <person name="Yamashita H."/>
            <person name="Murakawa K."/>
            <person name="Fujimori K."/>
            <person name="Tanai H."/>
            <person name="Kimata M."/>
            <person name="Watanabe M."/>
            <person name="Hiraoka S."/>
            <person name="Chiba Y."/>
            <person name="Ishida S."/>
            <person name="Ono Y."/>
            <person name="Takiguchi S."/>
            <person name="Watanabe S."/>
            <person name="Yosida M."/>
            <person name="Hotuta T."/>
            <person name="Kusano J."/>
            <person name="Kanehori K."/>
            <person name="Takahashi-Fujii A."/>
            <person name="Hara H."/>
            <person name="Tanase T.-O."/>
            <person name="Nomura Y."/>
            <person name="Togiya S."/>
            <person name="Komai F."/>
            <person name="Hara R."/>
            <person name="Takeuchi K."/>
            <person name="Arita M."/>
            <person name="Imose N."/>
            <person name="Musashino K."/>
            <person name="Yuuki H."/>
            <person name="Oshima A."/>
            <person name="Sasaki N."/>
            <person name="Aotsuka S."/>
            <person name="Yoshikawa Y."/>
            <person name="Matsunawa H."/>
            <person name="Ichihara T."/>
            <person name="Shiohata N."/>
            <person name="Sano S."/>
            <person name="Moriya S."/>
            <person name="Momiyama H."/>
            <person name="Satoh N."/>
            <person name="Takami S."/>
            <person name="Terashima Y."/>
            <person name="Suzuki O."/>
            <person name="Nakagawa S."/>
            <person name="Senoh A."/>
            <person name="Mizoguchi H."/>
            <person name="Goto Y."/>
            <person name="Shimizu F."/>
            <person name="Wakebe H."/>
            <person name="Hishigaki H."/>
            <person name="Watanabe T."/>
            <person name="Sugiyama A."/>
            <person name="Takemoto M."/>
            <person name="Kawakami B."/>
            <person name="Yamazaki M."/>
            <person name="Watanabe K."/>
            <person name="Kumagai A."/>
            <person name="Itakura S."/>
            <person name="Fukuzumi Y."/>
            <person name="Fujimori Y."/>
            <person name="Komiyama M."/>
            <person name="Tashiro H."/>
            <person name="Tanigami A."/>
            <person name="Fujiwara T."/>
            <person name="Ono T."/>
            <person name="Yamada K."/>
            <person name="Fujii Y."/>
            <person name="Ozaki K."/>
            <person name="Hirao M."/>
            <person name="Ohmori Y."/>
            <person name="Kawabata A."/>
            <person name="Hikiji T."/>
            <person name="Kobatake N."/>
            <person name="Inagaki H."/>
            <person name="Ikema Y."/>
            <person name="Okamoto S."/>
            <person name="Okitani R."/>
            <person name="Kawakami T."/>
            <person name="Noguchi S."/>
            <person name="Itoh T."/>
            <person name="Shigeta K."/>
            <person name="Senba T."/>
            <person name="Matsumura K."/>
            <person name="Nakajima Y."/>
            <person name="Mizuno T."/>
            <person name="Morinaga M."/>
            <person name="Sasaki M."/>
            <person name="Togashi T."/>
            <person name="Oyama M."/>
            <person name="Hata H."/>
            <person name="Watanabe M."/>
            <person name="Komatsu T."/>
            <person name="Mizushima-Sugano J."/>
            <person name="Satoh T."/>
            <person name="Shirai Y."/>
            <person name="Takahashi Y."/>
            <person name="Nakagawa K."/>
            <person name="Okumura K."/>
            <person name="Nagase T."/>
            <person name="Nomura N."/>
            <person name="Kikuchi H."/>
            <person name="Masuho Y."/>
            <person name="Yamashita R."/>
            <person name="Nakai K."/>
            <person name="Yada T."/>
            <person name="Nakamura Y."/>
            <person name="Ohara O."/>
            <person name="Isogai T."/>
            <person name="Sugano S."/>
        </authorList>
    </citation>
    <scope>NUCLEOTIDE SEQUENCE [LARGE SCALE MRNA]</scope>
</reference>
<reference key="10">
    <citation type="submission" date="2005-05" db="EMBL/GenBank/DDBJ databases">
        <authorList>
            <consortium name="NIEHS SNPs program"/>
        </authorList>
    </citation>
    <scope>NUCLEOTIDE SEQUENCE [GENOMIC DNA]</scope>
</reference>
<reference key="11">
    <citation type="submission" date="2005-07" db="EMBL/GenBank/DDBJ databases">
        <authorList>
            <person name="Mural R.J."/>
            <person name="Istrail S."/>
            <person name="Sutton G.G."/>
            <person name="Florea L."/>
            <person name="Halpern A.L."/>
            <person name="Mobarry C.M."/>
            <person name="Lippert R."/>
            <person name="Walenz B."/>
            <person name="Shatkay H."/>
            <person name="Dew I."/>
            <person name="Miller J.R."/>
            <person name="Flanigan M.J."/>
            <person name="Edwards N.J."/>
            <person name="Bolanos R."/>
            <person name="Fasulo D."/>
            <person name="Halldorsson B.V."/>
            <person name="Hannenhalli S."/>
            <person name="Turner R."/>
            <person name="Yooseph S."/>
            <person name="Lu F."/>
            <person name="Nusskern D.R."/>
            <person name="Shue B.C."/>
            <person name="Zheng X.H."/>
            <person name="Zhong F."/>
            <person name="Delcher A.L."/>
            <person name="Huson D.H."/>
            <person name="Kravitz S.A."/>
            <person name="Mouchard L."/>
            <person name="Reinert K."/>
            <person name="Remington K.A."/>
            <person name="Clark A.G."/>
            <person name="Waterman M.S."/>
            <person name="Eichler E.E."/>
            <person name="Adams M.D."/>
            <person name="Hunkapiller M.W."/>
            <person name="Myers E.W."/>
            <person name="Venter J.C."/>
        </authorList>
    </citation>
    <scope>NUCLEOTIDE SEQUENCE [LARGE SCALE GENOMIC DNA]</scope>
</reference>
<reference key="12">
    <citation type="journal article" date="2004" name="Genome Res.">
        <title>The status, quality, and expansion of the NIH full-length cDNA project: the Mammalian Gene Collection (MGC).</title>
        <authorList>
            <consortium name="The MGC Project Team"/>
        </authorList>
    </citation>
    <scope>NUCLEOTIDE SEQUENCE [LARGE SCALE MRNA]</scope>
    <source>
        <tissue>Liver</tissue>
        <tissue>Skin</tissue>
        <tissue>Urinary bladder</tissue>
    </source>
</reference>
<reference key="13">
    <citation type="journal article" date="1994" name="Protein Sci.">
        <title>The primary structure and properties of thioltransferase (glutaredoxin) from human red blood cells.</title>
        <authorList>
            <person name="Papov V.V."/>
            <person name="Gravina S.A."/>
            <person name="Mieyal J.J."/>
            <person name="Biemann K."/>
        </authorList>
    </citation>
    <scope>PROTEIN SEQUENCE OF 2-106</scope>
    <source>
        <tissue>Blood</tissue>
    </source>
</reference>
<reference key="14">
    <citation type="journal article" date="2009" name="Anal. Chem.">
        <title>Lys-N and trypsin cover complementary parts of the phosphoproteome in a refined SCX-based approach.</title>
        <authorList>
            <person name="Gauci S."/>
            <person name="Helbig A.O."/>
            <person name="Slijper M."/>
            <person name="Krijgsveld J."/>
            <person name="Heck A.J."/>
            <person name="Mohammed S."/>
        </authorList>
    </citation>
    <scope>ACETYLATION [LARGE SCALE ANALYSIS] AT ALA-2</scope>
    <scope>CLEAVAGE OF INITIATOR METHIONINE [LARGE SCALE ANALYSIS]</scope>
    <scope>IDENTIFICATION BY MASS SPECTROMETRY [LARGE SCALE ANALYSIS]</scope>
</reference>
<reference key="15">
    <citation type="journal article" date="2011" name="BMC Syst. Biol.">
        <title>Initial characterization of the human central proteome.</title>
        <authorList>
            <person name="Burkard T.R."/>
            <person name="Planyavsky M."/>
            <person name="Kaupe I."/>
            <person name="Breitwieser F.P."/>
            <person name="Buerckstuemmer T."/>
            <person name="Bennett K.L."/>
            <person name="Superti-Furga G."/>
            <person name="Colinge J."/>
        </authorList>
    </citation>
    <scope>IDENTIFICATION BY MASS SPECTROMETRY [LARGE SCALE ANALYSIS]</scope>
</reference>
<reference key="16">
    <citation type="journal article" date="2014" name="J. Proteomics">
        <title>An enzyme assisted RP-RPLC approach for in-depth analysis of human liver phosphoproteome.</title>
        <authorList>
            <person name="Bian Y."/>
            <person name="Song C."/>
            <person name="Cheng K."/>
            <person name="Dong M."/>
            <person name="Wang F."/>
            <person name="Huang J."/>
            <person name="Sun D."/>
            <person name="Wang L."/>
            <person name="Ye M."/>
            <person name="Zou H."/>
        </authorList>
    </citation>
    <scope>IDENTIFICATION BY MASS SPECTROMETRY [LARGE SCALE ANALYSIS]</scope>
    <source>
        <tissue>Liver</tissue>
    </source>
</reference>
<reference key="17">
    <citation type="journal article" date="2015" name="Proteomics">
        <title>N-terminome analysis of the human mitochondrial proteome.</title>
        <authorList>
            <person name="Vaca Jacome A.S."/>
            <person name="Rabilloud T."/>
            <person name="Schaeffer-Reiss C."/>
            <person name="Rompais M."/>
            <person name="Ayoub D."/>
            <person name="Lane L."/>
            <person name="Bairoch A."/>
            <person name="Van Dorsselaer A."/>
            <person name="Carapito C."/>
        </authorList>
    </citation>
    <scope>IDENTIFICATION BY MASS SPECTROMETRY [LARGE SCALE ANALYSIS]</scope>
</reference>
<reference key="18">
    <citation type="journal article" date="1998" name="J. Mol. Biol.">
        <title>The NMR solution structure of human glutaredoxin in the fully reduced form.</title>
        <authorList>
            <person name="Sun C."/>
            <person name="Berardi M.J."/>
            <person name="Bushweller J.H."/>
        </authorList>
    </citation>
    <scope>STRUCTURE BY NMR</scope>
</reference>
<reference key="19">
    <citation type="journal article" date="1998" name="Biochemistry">
        <title>Reactivity of the human thioltransferase (glutaredoxin) C7S, C25S, C78S, C82S mutant and NMR solution structure of its glutathionyl mixed disulfide intermediate reflect catalytic specificity.</title>
        <authorList>
            <person name="Yang Y."/>
            <person name="Jao S.C."/>
            <person name="Nanduri S."/>
            <person name="Starke D.W."/>
            <person name="Mieyal J.J."/>
            <person name="Qin J."/>
        </authorList>
    </citation>
    <scope>STRUCTURE BY NMR</scope>
</reference>
<comment type="function">
    <text>Has a glutathione-disulfide oxidoreductase activity in the presence of NADPH and glutathione reductase. Reduces low molecular weight disulfides and proteins.</text>
</comment>
<comment type="interaction">
    <interactant intactId="EBI-3905236">
        <id>P35754</id>
    </interactant>
    <interactant intactId="EBI-6929619">
        <id>Q9BVG3</id>
        <label>TRIM62</label>
    </interactant>
    <organismsDiffer>false</organismsDiffer>
    <experiments>5</experiments>
</comment>
<comment type="subcellular location">
    <subcellularLocation>
        <location>Cytoplasm</location>
    </subcellularLocation>
</comment>
<comment type="similarity">
    <text evidence="4">Belongs to the glutaredoxin family.</text>
</comment>
<accession>P35754</accession>
<accession>B2R4L2</accession>
<accession>Q3KQS1</accession>
<accession>Q6ICT1</accession>
<proteinExistence type="evidence at protein level"/>
<keyword id="KW-0002">3D-structure</keyword>
<keyword id="KW-0007">Acetylation</keyword>
<keyword id="KW-0963">Cytoplasm</keyword>
<keyword id="KW-0903">Direct protein sequencing</keyword>
<keyword id="KW-1015">Disulfide bond</keyword>
<keyword id="KW-0249">Electron transport</keyword>
<keyword id="KW-1267">Proteomics identification</keyword>
<keyword id="KW-0676">Redox-active center</keyword>
<keyword id="KW-1185">Reference proteome</keyword>
<keyword id="KW-0813">Transport</keyword>
<organism>
    <name type="scientific">Homo sapiens</name>
    <name type="common">Human</name>
    <dbReference type="NCBI Taxonomy" id="9606"/>
    <lineage>
        <taxon>Eukaryota</taxon>
        <taxon>Metazoa</taxon>
        <taxon>Chordata</taxon>
        <taxon>Craniata</taxon>
        <taxon>Vertebrata</taxon>
        <taxon>Euteleostomi</taxon>
        <taxon>Mammalia</taxon>
        <taxon>Eutheria</taxon>
        <taxon>Euarchontoglires</taxon>
        <taxon>Primates</taxon>
        <taxon>Haplorrhini</taxon>
        <taxon>Catarrhini</taxon>
        <taxon>Hominidae</taxon>
        <taxon>Homo</taxon>
    </lineage>
</organism>
<protein>
    <recommendedName>
        <fullName>Glutaredoxin-1</fullName>
    </recommendedName>
    <alternativeName>
        <fullName>Thioltransferase-1</fullName>
        <shortName>TTase-1</shortName>
    </alternativeName>
</protein>
<name>GLRX1_HUMAN</name>